<comment type="function">
    <text>Guanine nucleotide-binding proteins (G proteins) are involved as modulators or transducers in various transmembrane signaling systems.</text>
</comment>
<comment type="subunit">
    <text>G proteins are composed of 3 units; alpha, beta and gamma. The alpha chain contains the guanine nucleotide binding site.</text>
</comment>
<comment type="similarity">
    <text evidence="4">Belongs to the G-alpha family. G(i/o/t/z) subfamily.</text>
</comment>
<proteinExistence type="evidence at transcript level"/>
<feature type="initiator methionine" description="Removed" evidence="1">
    <location>
        <position position="1"/>
    </location>
</feature>
<feature type="chain" id="PRO_0000203687" description="Guanine nucleotide-binding protein G(i) subunit alpha">
    <location>
        <begin position="2"/>
        <end position="355"/>
    </location>
</feature>
<feature type="domain" description="G-alpha" evidence="3">
    <location>
        <begin position="33"/>
        <end position="355"/>
    </location>
</feature>
<feature type="region of interest" description="G1 motif" evidence="3">
    <location>
        <begin position="36"/>
        <end position="49"/>
    </location>
</feature>
<feature type="region of interest" description="G2 motif" evidence="3">
    <location>
        <begin position="174"/>
        <end position="182"/>
    </location>
</feature>
<feature type="region of interest" description="G3 motif" evidence="3">
    <location>
        <begin position="197"/>
        <end position="206"/>
    </location>
</feature>
<feature type="region of interest" description="G4 motif" evidence="3">
    <location>
        <begin position="266"/>
        <end position="273"/>
    </location>
</feature>
<feature type="region of interest" description="G5 motif" evidence="3">
    <location>
        <begin position="325"/>
        <end position="330"/>
    </location>
</feature>
<feature type="binding site" evidence="1">
    <location>
        <begin position="41"/>
        <end position="48"/>
    </location>
    <ligand>
        <name>GTP</name>
        <dbReference type="ChEBI" id="CHEBI:37565"/>
    </ligand>
</feature>
<feature type="binding site" evidence="1">
    <location>
        <position position="48"/>
    </location>
    <ligand>
        <name>Mg(2+)</name>
        <dbReference type="ChEBI" id="CHEBI:18420"/>
    </ligand>
</feature>
<feature type="binding site" evidence="1">
    <location>
        <begin position="176"/>
        <end position="182"/>
    </location>
    <ligand>
        <name>GTP</name>
        <dbReference type="ChEBI" id="CHEBI:37565"/>
    </ligand>
</feature>
<feature type="binding site" evidence="1">
    <location>
        <position position="182"/>
    </location>
    <ligand>
        <name>Mg(2+)</name>
        <dbReference type="ChEBI" id="CHEBI:18420"/>
    </ligand>
</feature>
<feature type="binding site" evidence="1">
    <location>
        <begin position="201"/>
        <end position="205"/>
    </location>
    <ligand>
        <name>GTP</name>
        <dbReference type="ChEBI" id="CHEBI:37565"/>
    </ligand>
</feature>
<feature type="binding site" evidence="1">
    <location>
        <begin position="270"/>
        <end position="273"/>
    </location>
    <ligand>
        <name>GTP</name>
        <dbReference type="ChEBI" id="CHEBI:37565"/>
    </ligand>
</feature>
<feature type="binding site" evidence="1">
    <location>
        <position position="327"/>
    </location>
    <ligand>
        <name>GTP</name>
        <dbReference type="ChEBI" id="CHEBI:37565"/>
    </ligand>
</feature>
<feature type="lipid moiety-binding region" description="N-myristoyl glycine" evidence="2">
    <location>
        <position position="2"/>
    </location>
</feature>
<feature type="lipid moiety-binding region" description="S-palmitoyl cysteine" evidence="2">
    <location>
        <position position="3"/>
    </location>
</feature>
<feature type="sequence conflict" description="In Ref. 1; AAB24072." evidence="4" ref="1">
    <location>
        <begin position="309"/>
        <end position="324"/>
    </location>
</feature>
<protein>
    <recommendedName>
        <fullName>Guanine nucleotide-binding protein G(i) subunit alpha</fullName>
    </recommendedName>
    <alternativeName>
        <fullName>Adenylate cyclase-inhibiting G alpha protein</fullName>
    </alternativeName>
</protein>
<reference key="1">
    <citation type="journal article" date="1992" name="Brain Res. Mol. Brain Res.">
        <title>Molecular cloning of a G-protein alpha i subunit from the lobster olfactory organ.</title>
        <authorList>
            <person name="McClintock T.S."/>
            <person name="Byrnes A.P."/>
            <person name="Lerner M.R."/>
        </authorList>
    </citation>
    <scope>NUCLEOTIDE SEQUENCE [MRNA]</scope>
    <source>
        <tissue>Olfactory organ</tissue>
    </source>
</reference>
<accession>P41776</accession>
<sequence>MGCAMSNAADKEAAERSKKIDKDLRLAGERAAREVKLLLLGAGESGKSTIVKQMKIIHETGYSREECEQYRPVVYSNTIQSLMAIIRAMGQLKIDFRDSSRADDARHFFTLASAADEGELTPELANIMKRLWNESGVQHCRNRSREYQLNDTAAYYLNALDRIARPGYIPTQQDVLRTRVKTTGIVETNFSFKNLNFKLFDVGGQRSERKKWIHCFEGVTAIIFVVALSGYDLVLAEDEEMNRMIESMKLFDSICNNKWFVETSIILFLNKKDLFEQKITKSPLTICFPEYQGSNVYEDSANYIRMKFENLNKRKDQKEIYTHFTCATDTNNIQFVFDAVTDVIIKNNLKDCGLF</sequence>
<dbReference type="EMBL" id="S47614">
    <property type="protein sequence ID" value="AAB24072.2"/>
    <property type="status" value="ALT_SEQ"/>
    <property type="molecule type" value="mRNA"/>
</dbReference>
<dbReference type="PIR" id="A48976">
    <property type="entry name" value="A48976"/>
</dbReference>
<dbReference type="SMR" id="P41776"/>
<dbReference type="OrthoDB" id="5817230at2759"/>
<dbReference type="GO" id="GO:0005737">
    <property type="term" value="C:cytoplasm"/>
    <property type="evidence" value="ECO:0007669"/>
    <property type="project" value="TreeGrafter"/>
</dbReference>
<dbReference type="GO" id="GO:0005834">
    <property type="term" value="C:heterotrimeric G-protein complex"/>
    <property type="evidence" value="ECO:0007669"/>
    <property type="project" value="TreeGrafter"/>
</dbReference>
<dbReference type="GO" id="GO:0001664">
    <property type="term" value="F:G protein-coupled receptor binding"/>
    <property type="evidence" value="ECO:0007669"/>
    <property type="project" value="TreeGrafter"/>
</dbReference>
<dbReference type="GO" id="GO:0031683">
    <property type="term" value="F:G-protein beta/gamma-subunit complex binding"/>
    <property type="evidence" value="ECO:0007669"/>
    <property type="project" value="InterPro"/>
</dbReference>
<dbReference type="GO" id="GO:0005525">
    <property type="term" value="F:GTP binding"/>
    <property type="evidence" value="ECO:0007669"/>
    <property type="project" value="UniProtKB-KW"/>
</dbReference>
<dbReference type="GO" id="GO:0003924">
    <property type="term" value="F:GTPase activity"/>
    <property type="evidence" value="ECO:0007669"/>
    <property type="project" value="InterPro"/>
</dbReference>
<dbReference type="GO" id="GO:0046872">
    <property type="term" value="F:metal ion binding"/>
    <property type="evidence" value="ECO:0007669"/>
    <property type="project" value="UniProtKB-KW"/>
</dbReference>
<dbReference type="GO" id="GO:0007188">
    <property type="term" value="P:adenylate cyclase-modulating G protein-coupled receptor signaling pathway"/>
    <property type="evidence" value="ECO:0007669"/>
    <property type="project" value="InterPro"/>
</dbReference>
<dbReference type="CDD" id="cd00066">
    <property type="entry name" value="G-alpha"/>
    <property type="match status" value="1"/>
</dbReference>
<dbReference type="FunFam" id="1.10.400.10:FF:000001">
    <property type="entry name" value="Guanine nucleotide-binding protein G(I) subunit alpha"/>
    <property type="match status" value="1"/>
</dbReference>
<dbReference type="FunFam" id="3.40.50.300:FF:000720">
    <property type="entry name" value="Guanine nucleotide-binding protein G(k) subunit alpha"/>
    <property type="match status" value="1"/>
</dbReference>
<dbReference type="FunFam" id="3.40.50.300:FF:003800">
    <property type="entry name" value="Guanine nucleotide-binding protein G(k) subunit alpha"/>
    <property type="match status" value="1"/>
</dbReference>
<dbReference type="Gene3D" id="1.10.400.10">
    <property type="entry name" value="GI Alpha 1, domain 2-like"/>
    <property type="match status" value="1"/>
</dbReference>
<dbReference type="Gene3D" id="3.40.50.300">
    <property type="entry name" value="P-loop containing nucleotide triphosphate hydrolases"/>
    <property type="match status" value="1"/>
</dbReference>
<dbReference type="InterPro" id="IPR001408">
    <property type="entry name" value="Gprotein_alpha_I"/>
</dbReference>
<dbReference type="InterPro" id="IPR001019">
    <property type="entry name" value="Gprotein_alpha_su"/>
</dbReference>
<dbReference type="InterPro" id="IPR011025">
    <property type="entry name" value="GproteinA_insert"/>
</dbReference>
<dbReference type="InterPro" id="IPR027417">
    <property type="entry name" value="P-loop_NTPase"/>
</dbReference>
<dbReference type="PANTHER" id="PTHR10218:SF227">
    <property type="entry name" value="G PROTEIN ALPHA I SUBUNIT"/>
    <property type="match status" value="1"/>
</dbReference>
<dbReference type="PANTHER" id="PTHR10218">
    <property type="entry name" value="GTP-BINDING PROTEIN ALPHA SUBUNIT"/>
    <property type="match status" value="1"/>
</dbReference>
<dbReference type="Pfam" id="PF00503">
    <property type="entry name" value="G-alpha"/>
    <property type="match status" value="1"/>
</dbReference>
<dbReference type="PRINTS" id="PR00318">
    <property type="entry name" value="GPROTEINA"/>
</dbReference>
<dbReference type="PRINTS" id="PR00441">
    <property type="entry name" value="GPROTEINAI"/>
</dbReference>
<dbReference type="SMART" id="SM00275">
    <property type="entry name" value="G_alpha"/>
    <property type="match status" value="1"/>
</dbReference>
<dbReference type="SUPFAM" id="SSF52540">
    <property type="entry name" value="P-loop containing nucleoside triphosphate hydrolases"/>
    <property type="match status" value="1"/>
</dbReference>
<dbReference type="SUPFAM" id="SSF47895">
    <property type="entry name" value="Transducin (alpha subunit), insertion domain"/>
    <property type="match status" value="1"/>
</dbReference>
<dbReference type="PROSITE" id="PS51882">
    <property type="entry name" value="G_ALPHA"/>
    <property type="match status" value="1"/>
</dbReference>
<organism>
    <name type="scientific">Homarus americanus</name>
    <name type="common">American lobster</name>
    <dbReference type="NCBI Taxonomy" id="6706"/>
    <lineage>
        <taxon>Eukaryota</taxon>
        <taxon>Metazoa</taxon>
        <taxon>Ecdysozoa</taxon>
        <taxon>Arthropoda</taxon>
        <taxon>Crustacea</taxon>
        <taxon>Multicrustacea</taxon>
        <taxon>Malacostraca</taxon>
        <taxon>Eumalacostraca</taxon>
        <taxon>Eucarida</taxon>
        <taxon>Decapoda</taxon>
        <taxon>Pleocyemata</taxon>
        <taxon>Astacidea</taxon>
        <taxon>Nephropoidea</taxon>
        <taxon>Nephropidae</taxon>
        <taxon>Homarus</taxon>
    </lineage>
</organism>
<name>GNAI_HOMAM</name>
<keyword id="KW-0342">GTP-binding</keyword>
<keyword id="KW-0449">Lipoprotein</keyword>
<keyword id="KW-0460">Magnesium</keyword>
<keyword id="KW-0479">Metal-binding</keyword>
<keyword id="KW-0519">Myristate</keyword>
<keyword id="KW-0547">Nucleotide-binding</keyword>
<keyword id="KW-0564">Palmitate</keyword>
<keyword id="KW-0807">Transducer</keyword>
<evidence type="ECO:0000250" key="1"/>
<evidence type="ECO:0000255" key="2"/>
<evidence type="ECO:0000255" key="3">
    <source>
        <dbReference type="PROSITE-ProRule" id="PRU01230"/>
    </source>
</evidence>
<evidence type="ECO:0000305" key="4"/>